<accession>Q9TDL7</accession>
<organism>
    <name type="scientific">Sagmatias cruciger</name>
    <name type="common">Hourglass dolphin</name>
    <name type="synonym">Lagenorhynchus cruciger</name>
    <dbReference type="NCBI Taxonomy" id="3371154"/>
    <lineage>
        <taxon>Eukaryota</taxon>
        <taxon>Metazoa</taxon>
        <taxon>Chordata</taxon>
        <taxon>Craniata</taxon>
        <taxon>Vertebrata</taxon>
        <taxon>Euteleostomi</taxon>
        <taxon>Mammalia</taxon>
        <taxon>Eutheria</taxon>
        <taxon>Laurasiatheria</taxon>
        <taxon>Artiodactyla</taxon>
        <taxon>Whippomorpha</taxon>
        <taxon>Cetacea</taxon>
        <taxon>Odontoceti</taxon>
        <taxon>Delphinidae</taxon>
        <taxon>Sagmatias</taxon>
    </lineage>
</organism>
<sequence length="379" mass="42816">MINIRKTHPLMKILNDAFIDLPTPSNISSWWNFGSLLGLCLIMQILTGLFLAMHYTPDTSTAFSSVAHICRDVNYGWFIRYLHANGASMFFICLYAHIGRGLYYGSYMFQETWNIGVLLLLTVMATAFVGYVLPWGQMSFWGATVITNLLSAIPYIGTTLVEWIWGGFSVDKATLTRFFAFHFILPFIITALAAVHLLFLHETGSNNPTGIPSNMDMIPFHPYYTIKDILGALFLILTLLALTLFTPDLLGDPDNYTPANPLSTPAHIKPEWYFLFAYAILRSIPNKLGGVLALLLSILILIFIPMLQTSKQRSMMFRPFSQLLFWTLIADLLTLTWIGGQPVEHPYIIVGQLASILYFLLILVLMPTVSLIENKLLKW</sequence>
<feature type="chain" id="PRO_0000061080" description="Cytochrome b">
    <location>
        <begin position="1"/>
        <end position="379"/>
    </location>
</feature>
<feature type="transmembrane region" description="Helical" evidence="2">
    <location>
        <begin position="33"/>
        <end position="53"/>
    </location>
</feature>
<feature type="transmembrane region" description="Helical" evidence="2">
    <location>
        <begin position="77"/>
        <end position="98"/>
    </location>
</feature>
<feature type="transmembrane region" description="Helical" evidence="2">
    <location>
        <begin position="113"/>
        <end position="133"/>
    </location>
</feature>
<feature type="transmembrane region" description="Helical" evidence="2">
    <location>
        <begin position="178"/>
        <end position="198"/>
    </location>
</feature>
<feature type="transmembrane region" description="Helical" evidence="2">
    <location>
        <begin position="226"/>
        <end position="246"/>
    </location>
</feature>
<feature type="transmembrane region" description="Helical" evidence="2">
    <location>
        <begin position="288"/>
        <end position="308"/>
    </location>
</feature>
<feature type="transmembrane region" description="Helical" evidence="2">
    <location>
        <begin position="320"/>
        <end position="340"/>
    </location>
</feature>
<feature type="transmembrane region" description="Helical" evidence="2">
    <location>
        <begin position="347"/>
        <end position="367"/>
    </location>
</feature>
<feature type="binding site" description="axial binding residue" evidence="2">
    <location>
        <position position="83"/>
    </location>
    <ligand>
        <name>heme b</name>
        <dbReference type="ChEBI" id="CHEBI:60344"/>
        <label>b562</label>
    </ligand>
    <ligandPart>
        <name>Fe</name>
        <dbReference type="ChEBI" id="CHEBI:18248"/>
    </ligandPart>
</feature>
<feature type="binding site" description="axial binding residue" evidence="2">
    <location>
        <position position="97"/>
    </location>
    <ligand>
        <name>heme b</name>
        <dbReference type="ChEBI" id="CHEBI:60344"/>
        <label>b566</label>
    </ligand>
    <ligandPart>
        <name>Fe</name>
        <dbReference type="ChEBI" id="CHEBI:18248"/>
    </ligandPart>
</feature>
<feature type="binding site" description="axial binding residue" evidence="2">
    <location>
        <position position="182"/>
    </location>
    <ligand>
        <name>heme b</name>
        <dbReference type="ChEBI" id="CHEBI:60344"/>
        <label>b562</label>
    </ligand>
    <ligandPart>
        <name>Fe</name>
        <dbReference type="ChEBI" id="CHEBI:18248"/>
    </ligandPart>
</feature>
<feature type="binding site" description="axial binding residue" evidence="2">
    <location>
        <position position="196"/>
    </location>
    <ligand>
        <name>heme b</name>
        <dbReference type="ChEBI" id="CHEBI:60344"/>
        <label>b566</label>
    </ligand>
    <ligandPart>
        <name>Fe</name>
        <dbReference type="ChEBI" id="CHEBI:18248"/>
    </ligandPart>
</feature>
<feature type="binding site" evidence="2">
    <location>
        <position position="201"/>
    </location>
    <ligand>
        <name>a ubiquinone</name>
        <dbReference type="ChEBI" id="CHEBI:16389"/>
    </ligand>
</feature>
<comment type="function">
    <text evidence="2">Component of the ubiquinol-cytochrome c reductase complex (complex III or cytochrome b-c1 complex) that is part of the mitochondrial respiratory chain. The b-c1 complex mediates electron transfer from ubiquinol to cytochrome c. Contributes to the generation of a proton gradient across the mitochondrial membrane that is then used for ATP synthesis.</text>
</comment>
<comment type="cofactor">
    <cofactor evidence="2">
        <name>heme b</name>
        <dbReference type="ChEBI" id="CHEBI:60344"/>
    </cofactor>
    <text evidence="2">Binds 2 heme b groups non-covalently.</text>
</comment>
<comment type="subunit">
    <text evidence="2">The cytochrome bc1 complex contains 11 subunits: 3 respiratory subunits (MT-CYB, CYC1 and UQCRFS1), 2 core proteins (UQCRC1 and UQCRC2) and 6 low-molecular weight proteins (UQCRH/QCR6, UQCRB/QCR7, UQCRQ/QCR8, UQCR10/QCR9, UQCR11/QCR10 and a cleavage product of UQCRFS1). This cytochrome bc1 complex then forms a dimer.</text>
</comment>
<comment type="subcellular location">
    <subcellularLocation>
        <location evidence="2">Mitochondrion inner membrane</location>
        <topology evidence="2">Multi-pass membrane protein</topology>
    </subcellularLocation>
</comment>
<comment type="miscellaneous">
    <text evidence="1">Heme 1 (or BL or b562) is low-potential and absorbs at about 562 nm, and heme 2 (or BH or b566) is high-potential and absorbs at about 566 nm.</text>
</comment>
<comment type="similarity">
    <text evidence="3 4">Belongs to the cytochrome b family.</text>
</comment>
<comment type="caution">
    <text evidence="2">The full-length protein contains only eight transmembrane helices, not nine as predicted by bioinformatics tools.</text>
</comment>
<geneLocation type="mitochondrion"/>
<protein>
    <recommendedName>
        <fullName>Cytochrome b</fullName>
    </recommendedName>
    <alternativeName>
        <fullName>Complex III subunit 3</fullName>
    </alternativeName>
    <alternativeName>
        <fullName>Complex III subunit III</fullName>
    </alternativeName>
    <alternativeName>
        <fullName>Cytochrome b-c1 complex subunit 3</fullName>
    </alternativeName>
    <alternativeName>
        <fullName>Ubiquinol-cytochrome-c reductase complex cytochrome b subunit</fullName>
    </alternativeName>
</protein>
<evidence type="ECO:0000250" key="1"/>
<evidence type="ECO:0000250" key="2">
    <source>
        <dbReference type="UniProtKB" id="P00157"/>
    </source>
</evidence>
<evidence type="ECO:0000255" key="3">
    <source>
        <dbReference type="PROSITE-ProRule" id="PRU00967"/>
    </source>
</evidence>
<evidence type="ECO:0000255" key="4">
    <source>
        <dbReference type="PROSITE-ProRule" id="PRU00968"/>
    </source>
</evidence>
<dbReference type="EMBL" id="AF084068">
    <property type="protein sequence ID" value="AAD54445.1"/>
    <property type="molecule type" value="Genomic_DNA"/>
</dbReference>
<dbReference type="SMR" id="Q9TDL7"/>
<dbReference type="GO" id="GO:0005743">
    <property type="term" value="C:mitochondrial inner membrane"/>
    <property type="evidence" value="ECO:0007669"/>
    <property type="project" value="UniProtKB-SubCell"/>
</dbReference>
<dbReference type="GO" id="GO:0045275">
    <property type="term" value="C:respiratory chain complex III"/>
    <property type="evidence" value="ECO:0007669"/>
    <property type="project" value="InterPro"/>
</dbReference>
<dbReference type="GO" id="GO:0046872">
    <property type="term" value="F:metal ion binding"/>
    <property type="evidence" value="ECO:0007669"/>
    <property type="project" value="UniProtKB-KW"/>
</dbReference>
<dbReference type="GO" id="GO:0008121">
    <property type="term" value="F:ubiquinol-cytochrome-c reductase activity"/>
    <property type="evidence" value="ECO:0007669"/>
    <property type="project" value="InterPro"/>
</dbReference>
<dbReference type="GO" id="GO:0006122">
    <property type="term" value="P:mitochondrial electron transport, ubiquinol to cytochrome c"/>
    <property type="evidence" value="ECO:0007669"/>
    <property type="project" value="TreeGrafter"/>
</dbReference>
<dbReference type="CDD" id="cd00290">
    <property type="entry name" value="cytochrome_b_C"/>
    <property type="match status" value="1"/>
</dbReference>
<dbReference type="CDD" id="cd00284">
    <property type="entry name" value="Cytochrome_b_N"/>
    <property type="match status" value="1"/>
</dbReference>
<dbReference type="FunFam" id="1.20.810.10:FF:000002">
    <property type="entry name" value="Cytochrome b"/>
    <property type="match status" value="1"/>
</dbReference>
<dbReference type="Gene3D" id="1.20.810.10">
    <property type="entry name" value="Cytochrome Bc1 Complex, Chain C"/>
    <property type="match status" value="1"/>
</dbReference>
<dbReference type="InterPro" id="IPR005798">
    <property type="entry name" value="Cyt_b/b6_C"/>
</dbReference>
<dbReference type="InterPro" id="IPR036150">
    <property type="entry name" value="Cyt_b/b6_C_sf"/>
</dbReference>
<dbReference type="InterPro" id="IPR005797">
    <property type="entry name" value="Cyt_b/b6_N"/>
</dbReference>
<dbReference type="InterPro" id="IPR027387">
    <property type="entry name" value="Cytb/b6-like_sf"/>
</dbReference>
<dbReference type="InterPro" id="IPR030689">
    <property type="entry name" value="Cytochrome_b"/>
</dbReference>
<dbReference type="InterPro" id="IPR048260">
    <property type="entry name" value="Cytochrome_b_C_euk/bac"/>
</dbReference>
<dbReference type="InterPro" id="IPR048259">
    <property type="entry name" value="Cytochrome_b_N_euk/bac"/>
</dbReference>
<dbReference type="InterPro" id="IPR016174">
    <property type="entry name" value="Di-haem_cyt_TM"/>
</dbReference>
<dbReference type="PANTHER" id="PTHR19271">
    <property type="entry name" value="CYTOCHROME B"/>
    <property type="match status" value="1"/>
</dbReference>
<dbReference type="PANTHER" id="PTHR19271:SF16">
    <property type="entry name" value="CYTOCHROME B"/>
    <property type="match status" value="1"/>
</dbReference>
<dbReference type="Pfam" id="PF00032">
    <property type="entry name" value="Cytochrom_B_C"/>
    <property type="match status" value="1"/>
</dbReference>
<dbReference type="Pfam" id="PF00033">
    <property type="entry name" value="Cytochrome_B"/>
    <property type="match status" value="1"/>
</dbReference>
<dbReference type="PIRSF" id="PIRSF038885">
    <property type="entry name" value="COB"/>
    <property type="match status" value="1"/>
</dbReference>
<dbReference type="SUPFAM" id="SSF81648">
    <property type="entry name" value="a domain/subunit of cytochrome bc1 complex (Ubiquinol-cytochrome c reductase)"/>
    <property type="match status" value="1"/>
</dbReference>
<dbReference type="SUPFAM" id="SSF81342">
    <property type="entry name" value="Transmembrane di-heme cytochromes"/>
    <property type="match status" value="1"/>
</dbReference>
<dbReference type="PROSITE" id="PS51003">
    <property type="entry name" value="CYTB_CTER"/>
    <property type="match status" value="1"/>
</dbReference>
<dbReference type="PROSITE" id="PS51002">
    <property type="entry name" value="CYTB_NTER"/>
    <property type="match status" value="1"/>
</dbReference>
<reference key="1">
    <citation type="journal article" date="1999" name="Mar. Mamm. Sci.">
        <title>Phylogenetic relationships among the delphinid cetaceans based on full cytochrome b sequences.</title>
        <authorList>
            <person name="LeDuc R.G."/>
            <person name="Perrin W.F."/>
            <person name="Dizon A.E."/>
        </authorList>
    </citation>
    <scope>NUCLEOTIDE SEQUENCE [GENOMIC DNA]</scope>
</reference>
<gene>
    <name type="primary">MT-CYB</name>
    <name type="synonym">COB</name>
    <name type="synonym">CYTB</name>
    <name type="synonym">MTCYB</name>
</gene>
<name>CYB_SAGCR</name>
<keyword id="KW-0249">Electron transport</keyword>
<keyword id="KW-0349">Heme</keyword>
<keyword id="KW-0408">Iron</keyword>
<keyword id="KW-0472">Membrane</keyword>
<keyword id="KW-0479">Metal-binding</keyword>
<keyword id="KW-0496">Mitochondrion</keyword>
<keyword id="KW-0999">Mitochondrion inner membrane</keyword>
<keyword id="KW-0679">Respiratory chain</keyword>
<keyword id="KW-0812">Transmembrane</keyword>
<keyword id="KW-1133">Transmembrane helix</keyword>
<keyword id="KW-0813">Transport</keyword>
<keyword id="KW-0830">Ubiquinone</keyword>
<proteinExistence type="inferred from homology"/>